<name>FBX36_PONAB</name>
<feature type="chain" id="PRO_0000119930" description="F-box only protein 36">
    <location>
        <begin position="1"/>
        <end position="188"/>
    </location>
</feature>
<feature type="domain" description="F-box" evidence="2">
    <location>
        <begin position="91"/>
        <end position="137"/>
    </location>
</feature>
<proteinExistence type="evidence at transcript level"/>
<keyword id="KW-1185">Reference proteome</keyword>
<keyword id="KW-0833">Ubl conjugation pathway</keyword>
<reference key="1">
    <citation type="submission" date="2004-11" db="EMBL/GenBank/DDBJ databases">
        <authorList>
            <consortium name="The German cDNA consortium"/>
        </authorList>
    </citation>
    <scope>NUCLEOTIDE SEQUENCE [LARGE SCALE MRNA]</scope>
    <source>
        <tissue>Kidney</tissue>
    </source>
</reference>
<accession>Q5R796</accession>
<dbReference type="EMBL" id="CR860222">
    <property type="protein sequence ID" value="CAH92364.1"/>
    <property type="molecule type" value="mRNA"/>
</dbReference>
<dbReference type="RefSeq" id="NP_001127546.1">
    <property type="nucleotide sequence ID" value="NM_001134074.1"/>
</dbReference>
<dbReference type="SMR" id="Q5R796"/>
<dbReference type="FunCoup" id="Q5R796">
    <property type="interactions" value="160"/>
</dbReference>
<dbReference type="STRING" id="9601.ENSPPYP00000014811"/>
<dbReference type="Ensembl" id="ENSPPYT00000049576.1">
    <property type="protein sequence ID" value="ENSPPYP00000026895.1"/>
    <property type="gene ID" value="ENSPPYG00000034678.1"/>
</dbReference>
<dbReference type="GeneID" id="100174623"/>
<dbReference type="KEGG" id="pon:100174623"/>
<dbReference type="CTD" id="130888"/>
<dbReference type="eggNOG" id="KOG1777">
    <property type="taxonomic scope" value="Eukaryota"/>
</dbReference>
<dbReference type="GeneTree" id="ENSGT00390000001015"/>
<dbReference type="HOGENOM" id="CLU_108656_0_0_1"/>
<dbReference type="InParanoid" id="Q5R796"/>
<dbReference type="OMA" id="CNSDELW"/>
<dbReference type="OrthoDB" id="3219396at2759"/>
<dbReference type="TreeFam" id="TF329337"/>
<dbReference type="Proteomes" id="UP000001595">
    <property type="component" value="Chromosome 2B"/>
</dbReference>
<dbReference type="GO" id="GO:0019005">
    <property type="term" value="C:SCF ubiquitin ligase complex"/>
    <property type="evidence" value="ECO:0007669"/>
    <property type="project" value="TreeGrafter"/>
</dbReference>
<dbReference type="GO" id="GO:0031146">
    <property type="term" value="P:SCF-dependent proteasomal ubiquitin-dependent protein catabolic process"/>
    <property type="evidence" value="ECO:0007669"/>
    <property type="project" value="TreeGrafter"/>
</dbReference>
<dbReference type="CDD" id="cd22106">
    <property type="entry name" value="F-box_FBXO36"/>
    <property type="match status" value="1"/>
</dbReference>
<dbReference type="Gene3D" id="1.20.1280.50">
    <property type="match status" value="1"/>
</dbReference>
<dbReference type="InterPro" id="IPR036047">
    <property type="entry name" value="F-box-like_dom_sf"/>
</dbReference>
<dbReference type="InterPro" id="IPR001810">
    <property type="entry name" value="F-box_dom"/>
</dbReference>
<dbReference type="InterPro" id="IPR052301">
    <property type="entry name" value="SCF_F-box/WD-repeat"/>
</dbReference>
<dbReference type="PANTHER" id="PTHR14381">
    <property type="entry name" value="DACTYLIN"/>
    <property type="match status" value="1"/>
</dbReference>
<dbReference type="PANTHER" id="PTHR14381:SF1">
    <property type="entry name" value="F-BOX_WD REPEAT-CONTAINING PROTEIN 4"/>
    <property type="match status" value="1"/>
</dbReference>
<dbReference type="Pfam" id="PF12937">
    <property type="entry name" value="F-box-like"/>
    <property type="match status" value="1"/>
</dbReference>
<dbReference type="SMART" id="SM00256">
    <property type="entry name" value="FBOX"/>
    <property type="match status" value="1"/>
</dbReference>
<dbReference type="SUPFAM" id="SSF81383">
    <property type="entry name" value="F-box domain"/>
    <property type="match status" value="1"/>
</dbReference>
<dbReference type="PROSITE" id="PS50181">
    <property type="entry name" value="FBOX"/>
    <property type="match status" value="1"/>
</dbReference>
<organism>
    <name type="scientific">Pongo abelii</name>
    <name type="common">Sumatran orangutan</name>
    <name type="synonym">Pongo pygmaeus abelii</name>
    <dbReference type="NCBI Taxonomy" id="9601"/>
    <lineage>
        <taxon>Eukaryota</taxon>
        <taxon>Metazoa</taxon>
        <taxon>Chordata</taxon>
        <taxon>Craniata</taxon>
        <taxon>Vertebrata</taxon>
        <taxon>Euteleostomi</taxon>
        <taxon>Mammalia</taxon>
        <taxon>Eutheria</taxon>
        <taxon>Euarchontoglires</taxon>
        <taxon>Primates</taxon>
        <taxon>Haplorrhini</taxon>
        <taxon>Catarrhini</taxon>
        <taxon>Hominidae</taxon>
        <taxon>Pongo</taxon>
    </lineage>
</organism>
<evidence type="ECO:0000250" key="1"/>
<evidence type="ECO:0000255" key="2">
    <source>
        <dbReference type="PROSITE-ProRule" id="PRU00080"/>
    </source>
</evidence>
<gene>
    <name type="primary">FBXO36</name>
</gene>
<comment type="function">
    <text evidence="1">Substrate-recognition component of the SCF (SKP1-CUL1-F-box protein)-type E3 ubiquitin ligase complex.</text>
</comment>
<comment type="subunit">
    <text evidence="1">Directly interacts with SKP1 and CUL1.</text>
</comment>
<sequence>MASWLPETLFETVGQGPPPSKDYYQLLVTRSQVIYRWWKISLRSEYRSTKPGEAKETHEDFLENSHLQGQTALIFGARILDYVINLCKGKFDFLERLSDDLLLNIISYLDLEDIARLCQTSHRFAKLCMSDKLWEQIVQSTCDTITPDVRALAEDTGWRQLFFTNKLQLQRQLRKRKQKYGNLREKQP</sequence>
<protein>
    <recommendedName>
        <fullName>F-box only protein 36</fullName>
    </recommendedName>
</protein>